<protein>
    <recommendedName>
        <fullName>Glycosyl-4,4'-diaponeurosporenoate acyltransferase</fullName>
        <ecNumber>2.3.1.-</ecNumber>
    </recommendedName>
</protein>
<evidence type="ECO:0000250" key="1"/>
<evidence type="ECO:0000255" key="2"/>
<evidence type="ECO:0000305" key="3"/>
<name>CRTO_STAHJ</name>
<accession>Q4L979</accession>
<keyword id="KW-0012">Acyltransferase</keyword>
<keyword id="KW-0125">Carotenoid biosynthesis</keyword>
<keyword id="KW-1003">Cell membrane</keyword>
<keyword id="KW-0472">Membrane</keyword>
<keyword id="KW-0732">Signal</keyword>
<keyword id="KW-0808">Transferase</keyword>
<keyword id="KW-0812">Transmembrane</keyword>
<keyword id="KW-1133">Transmembrane helix</keyword>
<feature type="signal peptide" evidence="2">
    <location>
        <begin position="1"/>
        <end position="25"/>
    </location>
</feature>
<feature type="chain" id="PRO_0000284856" description="Glycosyl-4,4'-diaponeurosporenoate acyltransferase">
    <location>
        <begin position="26"/>
        <end position="171"/>
    </location>
</feature>
<feature type="transmembrane region" description="Helical" evidence="2">
    <location>
        <begin position="125"/>
        <end position="144"/>
    </location>
</feature>
<proteinExistence type="inferred from homology"/>
<organism>
    <name type="scientific">Staphylococcus haemolyticus (strain JCSC1435)</name>
    <dbReference type="NCBI Taxonomy" id="279808"/>
    <lineage>
        <taxon>Bacteria</taxon>
        <taxon>Bacillati</taxon>
        <taxon>Bacillota</taxon>
        <taxon>Bacilli</taxon>
        <taxon>Bacillales</taxon>
        <taxon>Staphylococcaceae</taxon>
        <taxon>Staphylococcus</taxon>
    </lineage>
</organism>
<comment type="function">
    <text evidence="1">Catalyzes the acylation of glycosyl-4,4'-diaponeurosporenoate, i.e. the esterification of glucose at the C6'' position with the carboxyl group of the C(15) fatty acid 12-methyltetradecanoic acid, to yield staphyloxanthin. This is the last step in the biosynthesis of this orange pigment, present in most staphylococci strains (By similarity).</text>
</comment>
<comment type="pathway">
    <text>Carotenoid biosynthesis; staphyloxanthin biosynthesis; staphyloxanthin from farnesyl diphosphate: step 5/5.</text>
</comment>
<comment type="subcellular location">
    <subcellularLocation>
        <location evidence="3">Cell membrane</location>
        <topology evidence="3">Single-pass membrane protein</topology>
    </subcellularLocation>
</comment>
<comment type="similarity">
    <text evidence="3">Belongs to the acyltransferase CrtO family.</text>
</comment>
<reference key="1">
    <citation type="journal article" date="2005" name="J. Bacteriol.">
        <title>Whole-genome sequencing of Staphylococcus haemolyticus uncovers the extreme plasticity of its genome and the evolution of human-colonizing staphylococcal species.</title>
        <authorList>
            <person name="Takeuchi F."/>
            <person name="Watanabe S."/>
            <person name="Baba T."/>
            <person name="Yuzawa H."/>
            <person name="Ito T."/>
            <person name="Morimoto Y."/>
            <person name="Kuroda M."/>
            <person name="Cui L."/>
            <person name="Takahashi M."/>
            <person name="Ankai A."/>
            <person name="Baba S."/>
            <person name="Fukui S."/>
            <person name="Lee J.C."/>
            <person name="Hiramatsu K."/>
        </authorList>
    </citation>
    <scope>NUCLEOTIDE SEQUENCE [LARGE SCALE GENOMIC DNA]</scope>
    <source>
        <strain>JCSC1435</strain>
    </source>
</reference>
<dbReference type="EC" id="2.3.1.-"/>
<dbReference type="EMBL" id="AP006716">
    <property type="protein sequence ID" value="BAE03796.1"/>
    <property type="molecule type" value="Genomic_DNA"/>
</dbReference>
<dbReference type="RefSeq" id="WP_011274812.1">
    <property type="nucleotide sequence ID" value="NC_007168.1"/>
</dbReference>
<dbReference type="KEGG" id="sha:SH0487"/>
<dbReference type="eggNOG" id="ENOG503340V">
    <property type="taxonomic scope" value="Bacteria"/>
</dbReference>
<dbReference type="HOGENOM" id="CLU_133300_0_0_9"/>
<dbReference type="OrthoDB" id="3783432at2"/>
<dbReference type="UniPathway" id="UPA00029">
    <property type="reaction ID" value="UER00560"/>
</dbReference>
<dbReference type="Proteomes" id="UP000000543">
    <property type="component" value="Chromosome"/>
</dbReference>
<dbReference type="GO" id="GO:0005886">
    <property type="term" value="C:plasma membrane"/>
    <property type="evidence" value="ECO:0007669"/>
    <property type="project" value="UniProtKB-SubCell"/>
</dbReference>
<dbReference type="GO" id="GO:0016746">
    <property type="term" value="F:acyltransferase activity"/>
    <property type="evidence" value="ECO:0007669"/>
    <property type="project" value="UniProtKB-KW"/>
</dbReference>
<dbReference type="GO" id="GO:0016117">
    <property type="term" value="P:carotenoid biosynthetic process"/>
    <property type="evidence" value="ECO:0007669"/>
    <property type="project" value="UniProtKB-KW"/>
</dbReference>
<dbReference type="InterPro" id="IPR044021">
    <property type="entry name" value="CrtO"/>
</dbReference>
<dbReference type="Pfam" id="PF18927">
    <property type="entry name" value="CrtO"/>
    <property type="match status" value="1"/>
</dbReference>
<sequence length="171" mass="21014">MSLWKVMKLGLIHSAFWTTIQLSVSNMMLRCPTSVFVKYETFFKIWSWEKRGALWNKLFRINKWKHYIPEAAQFNYRIYNKRRLASFKLEDIHFMILEMRRAELVHWLSMIPIVIFIKAPKYILFINVCYVISAKLPIILTQRYNRPRLEHYYQLRMKRDERTCRKRKSSL</sequence>
<gene>
    <name type="primary">crtO</name>
    <name type="ordered locus">SH0487</name>
</gene>